<comment type="function">
    <text evidence="1">Binds 23S rRNA and is also seen to make contacts with the A and possibly P site tRNAs.</text>
</comment>
<comment type="subunit">
    <text evidence="1">Part of the 50S ribosomal subunit.</text>
</comment>
<comment type="similarity">
    <text evidence="1">Belongs to the universal ribosomal protein uL16 family.</text>
</comment>
<evidence type="ECO:0000255" key="1">
    <source>
        <dbReference type="HAMAP-Rule" id="MF_01342"/>
    </source>
</evidence>
<evidence type="ECO:0000305" key="2"/>
<accession>A6TEW5</accession>
<keyword id="KW-0687">Ribonucleoprotein</keyword>
<keyword id="KW-0689">Ribosomal protein</keyword>
<keyword id="KW-0694">RNA-binding</keyword>
<keyword id="KW-0699">rRNA-binding</keyword>
<keyword id="KW-0820">tRNA-binding</keyword>
<gene>
    <name evidence="1" type="primary">rplP</name>
    <name type="ordered locus">KPN78578_36750</name>
    <name type="ORF">KPN_03712</name>
</gene>
<feature type="chain" id="PRO_1000054637" description="Large ribosomal subunit protein uL16">
    <location>
        <begin position="1"/>
        <end position="136"/>
    </location>
</feature>
<protein>
    <recommendedName>
        <fullName evidence="1">Large ribosomal subunit protein uL16</fullName>
    </recommendedName>
    <alternativeName>
        <fullName evidence="2">50S ribosomal protein L16</fullName>
    </alternativeName>
</protein>
<sequence length="136" mass="15250">MLQPKRTKFRKVHKGRNRGLAQGTDVSFGTFGLKAVGRGRLTARQIEAARRAMTRAVKRQGKIWIRVFPDKPITEKPLEVRMGKGKGNVEYWVALIQPGKVLYEMDGVPEELAREAFGLAAAKLPIKTTFVTKTVM</sequence>
<organism>
    <name type="scientific">Klebsiella pneumoniae subsp. pneumoniae (strain ATCC 700721 / MGH 78578)</name>
    <dbReference type="NCBI Taxonomy" id="272620"/>
    <lineage>
        <taxon>Bacteria</taxon>
        <taxon>Pseudomonadati</taxon>
        <taxon>Pseudomonadota</taxon>
        <taxon>Gammaproteobacteria</taxon>
        <taxon>Enterobacterales</taxon>
        <taxon>Enterobacteriaceae</taxon>
        <taxon>Klebsiella/Raoultella group</taxon>
        <taxon>Klebsiella</taxon>
        <taxon>Klebsiella pneumoniae complex</taxon>
    </lineage>
</organism>
<name>RL16_KLEP7</name>
<reference key="1">
    <citation type="submission" date="2006-09" db="EMBL/GenBank/DDBJ databases">
        <authorList>
            <consortium name="The Klebsiella pneumonia Genome Sequencing Project"/>
            <person name="McClelland M."/>
            <person name="Sanderson E.K."/>
            <person name="Spieth J."/>
            <person name="Clifton W.S."/>
            <person name="Latreille P."/>
            <person name="Sabo A."/>
            <person name="Pepin K."/>
            <person name="Bhonagiri V."/>
            <person name="Porwollik S."/>
            <person name="Ali J."/>
            <person name="Wilson R.K."/>
        </authorList>
    </citation>
    <scope>NUCLEOTIDE SEQUENCE [LARGE SCALE GENOMIC DNA]</scope>
    <source>
        <strain>ATCC 700721 / MGH 78578</strain>
    </source>
</reference>
<proteinExistence type="inferred from homology"/>
<dbReference type="EMBL" id="CP000647">
    <property type="protein sequence ID" value="ABR79099.1"/>
    <property type="molecule type" value="Genomic_DNA"/>
</dbReference>
<dbReference type="RefSeq" id="WP_002919759.1">
    <property type="nucleotide sequence ID" value="NC_009648.1"/>
</dbReference>
<dbReference type="SMR" id="A6TEW5"/>
<dbReference type="STRING" id="272620.KPN_03712"/>
<dbReference type="jPOST" id="A6TEW5"/>
<dbReference type="PaxDb" id="272620-KPN_03712"/>
<dbReference type="EnsemblBacteria" id="ABR79099">
    <property type="protein sequence ID" value="ABR79099"/>
    <property type="gene ID" value="KPN_03712"/>
</dbReference>
<dbReference type="GeneID" id="97603662"/>
<dbReference type="KEGG" id="kpn:KPN_03712"/>
<dbReference type="HOGENOM" id="CLU_078858_2_1_6"/>
<dbReference type="Proteomes" id="UP000000265">
    <property type="component" value="Chromosome"/>
</dbReference>
<dbReference type="GO" id="GO:0022625">
    <property type="term" value="C:cytosolic large ribosomal subunit"/>
    <property type="evidence" value="ECO:0007669"/>
    <property type="project" value="TreeGrafter"/>
</dbReference>
<dbReference type="GO" id="GO:0019843">
    <property type="term" value="F:rRNA binding"/>
    <property type="evidence" value="ECO:0007669"/>
    <property type="project" value="UniProtKB-UniRule"/>
</dbReference>
<dbReference type="GO" id="GO:0003735">
    <property type="term" value="F:structural constituent of ribosome"/>
    <property type="evidence" value="ECO:0007669"/>
    <property type="project" value="InterPro"/>
</dbReference>
<dbReference type="GO" id="GO:0000049">
    <property type="term" value="F:tRNA binding"/>
    <property type="evidence" value="ECO:0007669"/>
    <property type="project" value="UniProtKB-KW"/>
</dbReference>
<dbReference type="GO" id="GO:0006412">
    <property type="term" value="P:translation"/>
    <property type="evidence" value="ECO:0007669"/>
    <property type="project" value="UniProtKB-UniRule"/>
</dbReference>
<dbReference type="CDD" id="cd01433">
    <property type="entry name" value="Ribosomal_L16_L10e"/>
    <property type="match status" value="1"/>
</dbReference>
<dbReference type="FunFam" id="3.90.1170.10:FF:000001">
    <property type="entry name" value="50S ribosomal protein L16"/>
    <property type="match status" value="1"/>
</dbReference>
<dbReference type="Gene3D" id="3.90.1170.10">
    <property type="entry name" value="Ribosomal protein L10e/L16"/>
    <property type="match status" value="1"/>
</dbReference>
<dbReference type="HAMAP" id="MF_01342">
    <property type="entry name" value="Ribosomal_uL16"/>
    <property type="match status" value="1"/>
</dbReference>
<dbReference type="InterPro" id="IPR047873">
    <property type="entry name" value="Ribosomal_uL16"/>
</dbReference>
<dbReference type="InterPro" id="IPR000114">
    <property type="entry name" value="Ribosomal_uL16_bact-type"/>
</dbReference>
<dbReference type="InterPro" id="IPR020798">
    <property type="entry name" value="Ribosomal_uL16_CS"/>
</dbReference>
<dbReference type="InterPro" id="IPR016180">
    <property type="entry name" value="Ribosomal_uL16_dom"/>
</dbReference>
<dbReference type="InterPro" id="IPR036920">
    <property type="entry name" value="Ribosomal_uL16_sf"/>
</dbReference>
<dbReference type="NCBIfam" id="TIGR01164">
    <property type="entry name" value="rplP_bact"/>
    <property type="match status" value="1"/>
</dbReference>
<dbReference type="PANTHER" id="PTHR12220">
    <property type="entry name" value="50S/60S RIBOSOMAL PROTEIN L16"/>
    <property type="match status" value="1"/>
</dbReference>
<dbReference type="PANTHER" id="PTHR12220:SF13">
    <property type="entry name" value="LARGE RIBOSOMAL SUBUNIT PROTEIN UL16M"/>
    <property type="match status" value="1"/>
</dbReference>
<dbReference type="Pfam" id="PF00252">
    <property type="entry name" value="Ribosomal_L16"/>
    <property type="match status" value="1"/>
</dbReference>
<dbReference type="PRINTS" id="PR00060">
    <property type="entry name" value="RIBOSOMALL16"/>
</dbReference>
<dbReference type="SUPFAM" id="SSF54686">
    <property type="entry name" value="Ribosomal protein L16p/L10e"/>
    <property type="match status" value="1"/>
</dbReference>
<dbReference type="PROSITE" id="PS00586">
    <property type="entry name" value="RIBOSOMAL_L16_1"/>
    <property type="match status" value="1"/>
</dbReference>
<dbReference type="PROSITE" id="PS00701">
    <property type="entry name" value="RIBOSOMAL_L16_2"/>
    <property type="match status" value="1"/>
</dbReference>